<reference key="1">
    <citation type="journal article" date="1999" name="Science">
        <title>Genome sequence of the radioresistant bacterium Deinococcus radiodurans R1.</title>
        <authorList>
            <person name="White O."/>
            <person name="Eisen J.A."/>
            <person name="Heidelberg J.F."/>
            <person name="Hickey E.K."/>
            <person name="Peterson J.D."/>
            <person name="Dodson R.J."/>
            <person name="Haft D.H."/>
            <person name="Gwinn M.L."/>
            <person name="Nelson W.C."/>
            <person name="Richardson D.L."/>
            <person name="Moffat K.S."/>
            <person name="Qin H."/>
            <person name="Jiang L."/>
            <person name="Pamphile W."/>
            <person name="Crosby M."/>
            <person name="Shen M."/>
            <person name="Vamathevan J.J."/>
            <person name="Lam P."/>
            <person name="McDonald L.A."/>
            <person name="Utterback T.R."/>
            <person name="Zalewski C."/>
            <person name="Makarova K.S."/>
            <person name="Aravind L."/>
            <person name="Daly M.J."/>
            <person name="Minton K.W."/>
            <person name="Fleischmann R.D."/>
            <person name="Ketchum K.A."/>
            <person name="Nelson K.E."/>
            <person name="Salzberg S.L."/>
            <person name="Smith H.O."/>
            <person name="Venter J.C."/>
            <person name="Fraser C.M."/>
        </authorList>
    </citation>
    <scope>NUCLEOTIDE SEQUENCE [LARGE SCALE GENOMIC DNA]</scope>
    <source>
        <strain>ATCC 13939 / DSM 20539 / JCM 16871 / CCUG 27074 / LMG 4051 / NBRC 15346 / NCIMB 9279 / VKM B-1422 / R1</strain>
    </source>
</reference>
<reference evidence="3" key="2">
    <citation type="submission" date="2003-05" db="UniProtKB">
        <authorList>
            <person name="Joshi B.S."/>
            <person name="Apte S.K."/>
            <person name="Schmid R."/>
            <person name="Altendorf K."/>
        </authorList>
    </citation>
    <scope>PROTEIN SEQUENCE OF 25-43</scope>
    <source>
        <strain>ATCC 13939 / DSM 20539 / JCM 16871 / CCUG 27074 / LMG 4051 / NBRC 15346 / NCIMB 9279 / VKM B-1422 / R1</strain>
    </source>
</reference>
<dbReference type="EMBL" id="AE000513">
    <property type="protein sequence ID" value="AAF11010.1"/>
    <property type="molecule type" value="Genomic_DNA"/>
</dbReference>
<dbReference type="PIR" id="H75395">
    <property type="entry name" value="H75395"/>
</dbReference>
<dbReference type="RefSeq" id="NP_295161.1">
    <property type="nucleotide sequence ID" value="NC_001263.1"/>
</dbReference>
<dbReference type="RefSeq" id="WP_010888077.1">
    <property type="nucleotide sequence ID" value="NC_001263.1"/>
</dbReference>
<dbReference type="SMR" id="Q9RUE8"/>
<dbReference type="STRING" id="243230.DR_1438"/>
<dbReference type="PaxDb" id="243230-DR_1438"/>
<dbReference type="EnsemblBacteria" id="AAF11010">
    <property type="protein sequence ID" value="AAF11010"/>
    <property type="gene ID" value="DR_1438"/>
</dbReference>
<dbReference type="GeneID" id="69517679"/>
<dbReference type="KEGG" id="dra:DR_1438"/>
<dbReference type="PATRIC" id="fig|243230.17.peg.1634"/>
<dbReference type="eggNOG" id="COG1653">
    <property type="taxonomic scope" value="Bacteria"/>
</dbReference>
<dbReference type="HOGENOM" id="CLU_031285_9_1_0"/>
<dbReference type="InParanoid" id="Q9RUE8"/>
<dbReference type="OrthoDB" id="9808332at2"/>
<dbReference type="Proteomes" id="UP000002524">
    <property type="component" value="Chromosome 1"/>
</dbReference>
<dbReference type="CDD" id="cd14750">
    <property type="entry name" value="PBP2_TMBP"/>
    <property type="match status" value="1"/>
</dbReference>
<dbReference type="Gene3D" id="3.40.190.10">
    <property type="entry name" value="Periplasmic binding protein-like II"/>
    <property type="match status" value="2"/>
</dbReference>
<dbReference type="InterPro" id="IPR050490">
    <property type="entry name" value="Bact_solute-bd_prot1"/>
</dbReference>
<dbReference type="InterPro" id="IPR006059">
    <property type="entry name" value="SBP"/>
</dbReference>
<dbReference type="PANTHER" id="PTHR43649:SF34">
    <property type="entry name" value="ABC TRANSPORTER PERIPLASMIC-BINDING PROTEIN YCJN-RELATED"/>
    <property type="match status" value="1"/>
</dbReference>
<dbReference type="PANTHER" id="PTHR43649">
    <property type="entry name" value="ARABINOSE-BINDING PROTEIN-RELATED"/>
    <property type="match status" value="1"/>
</dbReference>
<dbReference type="Pfam" id="PF01547">
    <property type="entry name" value="SBP_bac_1"/>
    <property type="match status" value="1"/>
</dbReference>
<dbReference type="SUPFAM" id="SSF53850">
    <property type="entry name" value="Periplasmic binding protein-like II"/>
    <property type="match status" value="1"/>
</dbReference>
<dbReference type="PROSITE" id="PS51257">
    <property type="entry name" value="PROKAR_LIPOPROTEIN"/>
    <property type="match status" value="1"/>
</dbReference>
<name>UE38_DEIRA</name>
<protein>
    <recommendedName>
        <fullName>Probable ABC transporter-binding protein DR_1438</fullName>
    </recommendedName>
</protein>
<accession>Q9RUE8</accession>
<evidence type="ECO:0000255" key="1">
    <source>
        <dbReference type="PROSITE-ProRule" id="PRU00303"/>
    </source>
</evidence>
<evidence type="ECO:0000269" key="2">
    <source ref="2"/>
</evidence>
<evidence type="ECO:0000305" key="3"/>
<keyword id="KW-0903">Direct protein sequencing</keyword>
<keyword id="KW-1185">Reference proteome</keyword>
<keyword id="KW-0732">Signal</keyword>
<keyword id="KW-0813">Transport</keyword>
<sequence length="420" mass="44741">MKKFAAVLGLTVAFAAASQAHAVTLTFACDSVGQGFDECKKGADAWAKKTGNTVKLVQVPKESDARLALYQQQLGAKASDVDVYMIDVVWPGLIGQHLMDLSKSIPAAEVKAHFPAIVQNNTVGGKLIAMPWFTDAGVLYYRTDLLKKYGYNAPPKTWNELATMAQKIQAGERKSNPKFVGYVFQGKNYEGLTCDALEWISSFGGGSIVDPSGKITVNNPKAVQALQAIQGLIGTAAPAAVTTYGEEEARNVWQAGNSAFMRNWPYAYAAGQKEGSPIAGKIGVAALPAGPGGKPAATLGGWQLAVNAYSKNPKEAADLVRYLTGAQEQKRRAVQASYNPTIATLYKDKDVLKAVPFFGSLYDVFTNAVARPATVTGSKYNQVSDAFSSAVYSVLTKKSAPGPALKTLEGQLARIKGRGW</sequence>
<feature type="signal peptide" evidence="1 2">
    <location>
        <begin position="1"/>
        <end position="24"/>
    </location>
</feature>
<feature type="chain" id="PRO_0000031715" description="Probable ABC transporter-binding protein DR_1438">
    <location>
        <begin position="25"/>
        <end position="420"/>
    </location>
</feature>
<gene>
    <name type="ordered locus">DR_1438</name>
</gene>
<proteinExistence type="evidence at protein level"/>
<organism>
    <name type="scientific">Deinococcus radiodurans (strain ATCC 13939 / DSM 20539 / JCM 16871 / CCUG 27074 / LMG 4051 / NBRC 15346 / NCIMB 9279 / VKM B-1422 / R1)</name>
    <dbReference type="NCBI Taxonomy" id="243230"/>
    <lineage>
        <taxon>Bacteria</taxon>
        <taxon>Thermotogati</taxon>
        <taxon>Deinococcota</taxon>
        <taxon>Deinococci</taxon>
        <taxon>Deinococcales</taxon>
        <taxon>Deinococcaceae</taxon>
        <taxon>Deinococcus</taxon>
    </lineage>
</organism>
<comment type="function">
    <text>Probably part of a binding-protein-dependent transport system.</text>
</comment>
<comment type="similarity">
    <text evidence="3">Belongs to the bacterial solute-binding protein 1 family.</text>
</comment>